<protein>
    <recommendedName>
        <fullName evidence="5">FAD-dependent monooxygenase atnA</fullName>
        <ecNumber evidence="7">1.-.-.-</ecNumber>
    </recommendedName>
    <alternativeName>
        <fullName evidence="5">Arthripenoid biosynthesis cluster protein A</fullName>
    </alternativeName>
</protein>
<keyword id="KW-0274">FAD</keyword>
<keyword id="KW-0285">Flavoprotein</keyword>
<keyword id="KW-0472">Membrane</keyword>
<keyword id="KW-0503">Monooxygenase</keyword>
<keyword id="KW-0560">Oxidoreductase</keyword>
<keyword id="KW-0812">Transmembrane</keyword>
<keyword id="KW-1133">Transmembrane helix</keyword>
<comment type="function">
    <text evidence="4 7">FAD-dependent monooxygenase; part of the gene cluster that mediates the biosynthesis of the meroterpenoids arthripenoids (PubMed:29797385). The pathway begins with the HR-PKS atnH that catalyzes two chain-extension steps to form a reduced triketide, which then primes the SAT domain in the NR-PKS atnG to initiate three more cycles of extension to give a linear hexaketide corresponding to the polyketide part of arthripenoids (PubMed:29797385). The FAD-dependent monooxygenase atnJ then performs an oxidative decarboxylation at C11 of the atnH/atnG product, via an electrophilic aromatic hydroxylation with concomitant ipso-decarboxylation (PubMed:29797385). The membrane-bound polyprenyl transferase atnF then introduces a farnesyl group before the FAD-dependent monooxygenase atnK functions as the first epoxidase on terminal C12'-C13' olefin, followed by a second epoxidation on C7'-C8' catalyzed by atnA (PubMed:29797385). The terpene cyclase/mutase atnI then initiates the sequential tricyclic ring formation through protonation of the terminal epoxide and catalyzes the regioselective and stereoselective 6/6/6-tricyclic ring formation (PubMed:29797385). The cytochrome P450 monooxygenase atnM is responsible for hydroxylating both C1' and C10' (Probable). The next steps may involve ketoreduction and acetyl transfer by the ketoreductase atnB and the acetyltransferase atnC, and lead to the production of arthripenoid B, the final biosynthetic product of the atn cluster (PubMed:29797385). The hydroquinone moiety in arthripenoid B is prone to undergo spontaneous oxidation to afford a benzoquinone compound, a key intermediate for generating structure diversity (Probable). For instance, addition of a cysteine followed by ring contraction gives arthripenoid A, tautomerization gives the main product arthripenoid C, addition of a molecular of water or amine affords arthripenoid D or E, respectively, and loss of one water forms arthripenoid F (Probable).</text>
</comment>
<comment type="cofactor">
    <cofactor evidence="1">
        <name>FAD</name>
        <dbReference type="ChEBI" id="CHEBI:57692"/>
    </cofactor>
</comment>
<comment type="pathway">
    <text evidence="4">Secondary metabolite biosynthesis; terpenoid biosynthesis.</text>
</comment>
<comment type="subcellular location">
    <subcellularLocation>
        <location evidence="3">Membrane</location>
        <topology evidence="3">Multi-pass membrane protein</topology>
    </subcellularLocation>
</comment>
<comment type="induction">
    <text evidence="4">Expression is induce on medium.</text>
</comment>
<comment type="disruption phenotype">
    <text evidence="4">Abolishes the production of arthripenoids but leads to the accumulation of a new compound that possesses a sesquiterpenoid chain with adiol group at C12' and C13' position.</text>
</comment>
<comment type="similarity">
    <text evidence="6">Belongs to the paxM FAD-dependent monooxygenase family.</text>
</comment>
<feature type="chain" id="PRO_0000452553" description="FAD-dependent monooxygenase atnA">
    <location>
        <begin position="1"/>
        <end position="751"/>
    </location>
</feature>
<feature type="transmembrane region" description="Helical" evidence="3">
    <location>
        <begin position="8"/>
        <end position="28"/>
    </location>
</feature>
<feature type="transmembrane region" description="Helical" evidence="3">
    <location>
        <begin position="446"/>
        <end position="466"/>
    </location>
</feature>
<feature type="transmembrane region" description="Helical" evidence="3">
    <location>
        <begin position="481"/>
        <end position="501"/>
    </location>
</feature>
<feature type="transmembrane region" description="Helical" evidence="3">
    <location>
        <begin position="508"/>
        <end position="528"/>
    </location>
</feature>
<feature type="transmembrane region" description="Helical" evidence="3">
    <location>
        <begin position="563"/>
        <end position="583"/>
    </location>
</feature>
<feature type="transmembrane region" description="Helical" evidence="3">
    <location>
        <begin position="590"/>
        <end position="610"/>
    </location>
</feature>
<feature type="transmembrane region" description="Helical" evidence="3">
    <location>
        <begin position="639"/>
        <end position="659"/>
    </location>
</feature>
<feature type="transmembrane region" description="Helical" evidence="3">
    <location>
        <begin position="663"/>
        <end position="683"/>
    </location>
</feature>
<feature type="transmembrane region" description="Helical" evidence="3">
    <location>
        <begin position="706"/>
        <end position="726"/>
    </location>
</feature>
<feature type="active site" evidence="2">
    <location>
        <position position="218"/>
    </location>
</feature>
<feature type="binding site" evidence="2">
    <location>
        <position position="34"/>
    </location>
    <ligand>
        <name>FAD</name>
        <dbReference type="ChEBI" id="CHEBI:57692"/>
    </ligand>
</feature>
<feature type="binding site" evidence="2">
    <location>
        <position position="48"/>
    </location>
    <ligand>
        <name>FAD</name>
        <dbReference type="ChEBI" id="CHEBI:57692"/>
    </ligand>
</feature>
<feature type="binding site" evidence="2">
    <location>
        <position position="109"/>
    </location>
    <ligand>
        <name>FAD</name>
        <dbReference type="ChEBI" id="CHEBI:57692"/>
    </ligand>
</feature>
<feature type="binding site" evidence="2">
    <location>
        <position position="311"/>
    </location>
    <ligand>
        <name>FAD</name>
        <dbReference type="ChEBI" id="CHEBI:57692"/>
    </ligand>
</feature>
<feature type="binding site" evidence="2">
    <location>
        <position position="324"/>
    </location>
    <ligand>
        <name>FAD</name>
        <dbReference type="ChEBI" id="CHEBI:57692"/>
    </ligand>
</feature>
<proteinExistence type="evidence at transcript level"/>
<name>ATNA_ARTSZ</name>
<dbReference type="EC" id="1.-.-.-" evidence="7"/>
<dbReference type="EMBL" id="MH183007">
    <property type="protein sequence ID" value="AYO60874.1"/>
    <property type="molecule type" value="mRNA"/>
</dbReference>
<dbReference type="SMR" id="A0A455LLW3"/>
<dbReference type="UniPathway" id="UPA00213"/>
<dbReference type="GO" id="GO:0016020">
    <property type="term" value="C:membrane"/>
    <property type="evidence" value="ECO:0007669"/>
    <property type="project" value="UniProtKB-SubCell"/>
</dbReference>
<dbReference type="GO" id="GO:0071949">
    <property type="term" value="F:FAD binding"/>
    <property type="evidence" value="ECO:0007669"/>
    <property type="project" value="InterPro"/>
</dbReference>
<dbReference type="GO" id="GO:0004497">
    <property type="term" value="F:monooxygenase activity"/>
    <property type="evidence" value="ECO:0007669"/>
    <property type="project" value="UniProtKB-KW"/>
</dbReference>
<dbReference type="GO" id="GO:0016114">
    <property type="term" value="P:terpenoid biosynthetic process"/>
    <property type="evidence" value="ECO:0007669"/>
    <property type="project" value="UniProtKB-UniPathway"/>
</dbReference>
<dbReference type="Gene3D" id="3.50.50.60">
    <property type="entry name" value="FAD/NAD(P)-binding domain"/>
    <property type="match status" value="1"/>
</dbReference>
<dbReference type="InterPro" id="IPR002938">
    <property type="entry name" value="FAD-bd"/>
</dbReference>
<dbReference type="InterPro" id="IPR036188">
    <property type="entry name" value="FAD/NAD-bd_sf"/>
</dbReference>
<dbReference type="InterPro" id="IPR050562">
    <property type="entry name" value="FAD_mOase_fung"/>
</dbReference>
<dbReference type="PANTHER" id="PTHR47356:SF2">
    <property type="entry name" value="FAD-BINDING DOMAIN-CONTAINING PROTEIN-RELATED"/>
    <property type="match status" value="1"/>
</dbReference>
<dbReference type="PANTHER" id="PTHR47356">
    <property type="entry name" value="FAD-DEPENDENT MONOOXYGENASE ASQG-RELATED"/>
    <property type="match status" value="1"/>
</dbReference>
<dbReference type="Pfam" id="PF01494">
    <property type="entry name" value="FAD_binding_3"/>
    <property type="match status" value="1"/>
</dbReference>
<dbReference type="PRINTS" id="PR00420">
    <property type="entry name" value="RNGMNOXGNASE"/>
</dbReference>
<dbReference type="SUPFAM" id="SSF51905">
    <property type="entry name" value="FAD/NAD(P)-binding domain"/>
    <property type="match status" value="1"/>
</dbReference>
<evidence type="ECO:0000250" key="1">
    <source>
        <dbReference type="UniProtKB" id="A6T923"/>
    </source>
</evidence>
<evidence type="ECO:0000250" key="2">
    <source>
        <dbReference type="UniProtKB" id="B8M9J8"/>
    </source>
</evidence>
<evidence type="ECO:0000255" key="3"/>
<evidence type="ECO:0000269" key="4">
    <source>
    </source>
</evidence>
<evidence type="ECO:0000303" key="5">
    <source>
    </source>
</evidence>
<evidence type="ECO:0000305" key="6"/>
<evidence type="ECO:0000305" key="7">
    <source>
    </source>
</evidence>
<sequence>MATPFKVLIVGGGVAGLSLAIMLEAYGFDYELLEKHPDVAPKLGAGVGLTPNGARILDQIGVWDSMCEYASPVDAGIALSPTGNTVIFNPHMGEWLEKLFGYKIHFLSRHDCLRILFDKIKQKSNIHLRKEVTRISVGQPGEKAQVETKDGSTYIADLVIGADGVRSSVRNELWRIADTEKPGYIPNRDKSGIVSIYTAVIGIAHDPGLPRGGSARAYNHLRSYFTQEGVEGSGVFYWWLCTKNEEPIKGIVPKLSSDTKQTLLDKYADDQIGHGLTLGGLYKKSVYSAIIPLQEFVLEKCFYKNILLIGDTFRKLHPVAGQGANSAIEESALVADILWQLRENNALHDAAGMKQALTEFQEERFVRTTALREDANLVQRMESFDNLFMKFLSLHVIPRLPFVVAFLPQLGSAFTPARCMKYLPPPKAGMCPFSPDMQAKPNPRSPLATISWIVFLTLAACFPWSVHRLLPASSSSLPGFSEVFQLYTSVMAVSISGLWVIESYKASLLISPMFSSLPWILASNYWGWDKTLPVYLCFHVISSQHTVHYYTPQFMTDLGAAKALLPCLAMAYSIPGILTALASTDQTLSDWWPVAHCTFPVLVYVSSTFLRGMKAVPQGVEVVFSSVDLPYQRRFLTAIAVVSSAVHVTLIWNHGAALLNEGIISLLSVPLARTLASLTALIVAWGIYMTWEMRRIFATEVSLVKAWAVILVSTVLLGPAASLAGATYWSKVMLEKATSMQPLVQPTNGKS</sequence>
<reference key="1">
    <citation type="journal article" date="2018" name="Angew. Chem. Int. Ed.">
        <title>Genome mining and comparative biosynthesis of meroterpenoids from two phylogenetically distinct fungi.</title>
        <authorList>
            <person name="Zhang X."/>
            <person name="Wang T.T."/>
            <person name="Xu Q.L."/>
            <person name="Xiong Y."/>
            <person name="Zhang L."/>
            <person name="Han H."/>
            <person name="Xu K."/>
            <person name="Guo W.J."/>
            <person name="Xu Q."/>
            <person name="Tan R.X."/>
            <person name="Ge H.M."/>
        </authorList>
    </citation>
    <scope>NUCLEOTIDE SEQUENCE [MRNA]</scope>
    <scope>DISRUPTION PHENOTYPE</scope>
    <scope>FUNCTION</scope>
    <scope>PATHWAY</scope>
    <source>
        <strain>NF2194</strain>
    </source>
</reference>
<organism>
    <name type="scientific">Arthrinium sp</name>
    <dbReference type="NCBI Taxonomy" id="1756131"/>
    <lineage>
        <taxon>Eukaryota</taxon>
        <taxon>Fungi</taxon>
        <taxon>Dikarya</taxon>
        <taxon>Ascomycota</taxon>
        <taxon>Pezizomycotina</taxon>
        <taxon>Sordariomycetes</taxon>
        <taxon>Xylariomycetidae</taxon>
        <taxon>Amphisphaeriales</taxon>
        <taxon>Apiosporaceae</taxon>
        <taxon>Arthrinium</taxon>
    </lineage>
</organism>
<accession>A0A455LLW3</accession>
<gene>
    <name evidence="5" type="primary">atnA</name>
</gene>